<evidence type="ECO:0000250" key="1">
    <source>
        <dbReference type="UniProtKB" id="Q06850"/>
    </source>
</evidence>
<evidence type="ECO:0000255" key="2"/>
<evidence type="ECO:0000255" key="3">
    <source>
        <dbReference type="PROSITE-ProRule" id="PRU00159"/>
    </source>
</evidence>
<evidence type="ECO:0000255" key="4">
    <source>
        <dbReference type="PROSITE-ProRule" id="PRU00448"/>
    </source>
</evidence>
<evidence type="ECO:0000256" key="5">
    <source>
        <dbReference type="SAM" id="MobiDB-lite"/>
    </source>
</evidence>
<evidence type="ECO:0000269" key="6">
    <source>
    </source>
</evidence>
<evidence type="ECO:0000303" key="7">
    <source>
    </source>
</evidence>
<evidence type="ECO:0000305" key="8"/>
<evidence type="ECO:0000312" key="9">
    <source>
        <dbReference type="EMBL" id="AAS07386.1"/>
    </source>
</evidence>
<evidence type="ECO:0000312" key="10">
    <source>
        <dbReference type="EMBL" id="AAT77923.1"/>
    </source>
</evidence>
<evidence type="ECO:0000312" key="11">
    <source>
        <dbReference type="EMBL" id="ABF99465.1"/>
    </source>
</evidence>
<evidence type="ECO:0000312" key="12">
    <source>
        <dbReference type="EMBL" id="BAS86977.1"/>
    </source>
</evidence>
<evidence type="ECO:0000312" key="13">
    <source>
        <dbReference type="EMBL" id="EAZ29001.1"/>
    </source>
</evidence>
<sequence>MGNCCGTPATAEEGGKRRRRGKQKKANPFTVAYNRAPSSAGAAAGRPGLMVLRDPTGRDLGARYELGGELGRGEFGITYLCTEAETGDRYACKSISKRKLRTPVDVEDVRREVEIMRHMPSHPNIVSLRAAYEDEDNVHLVMELCEGGELFDRIVARGHYTERAAAAVTRTIVEVVQMCHRHGVMHRDLKPENFLYANKKDSSPLKAIDFGLSVFFRPGERFTEIVGSPYYMAPEVLKRHYGPEVDVWSAGVILYILLCGVPPFWAETEQGVAQAIIRSVVDFKREPWPRVSEPAKDLVKRMLDPNPMTRLTAEQVLEHPWLHDSKKMPDIPLGDAVRARLQQFAAMNKLKKKALKVIAEHLSAEEAADIKDMFDKMDVSKNGQLTFEDFKAGIRKLGNQMPDSDLKILMDAADIDKNGILDYQEFVAVSIHVRKIGNDEHIQKAFSYFDQNKSGYIEIEELREALVDEIDGNDEDIINSIIRDVDTDKDGKISYDEFAVMMKAGTDWRKASRQYSRQRFSNLSLKLQKDGSISDDTQ</sequence>
<comment type="function">
    <text evidence="1">May play a role in signal transduction pathways that involve calcium as a second messenger.</text>
</comment>
<comment type="catalytic activity">
    <reaction evidence="8">
        <text>L-seryl-[protein] + ATP = O-phospho-L-seryl-[protein] + ADP + H(+)</text>
        <dbReference type="Rhea" id="RHEA:17989"/>
        <dbReference type="Rhea" id="RHEA-COMP:9863"/>
        <dbReference type="Rhea" id="RHEA-COMP:11604"/>
        <dbReference type="ChEBI" id="CHEBI:15378"/>
        <dbReference type="ChEBI" id="CHEBI:29999"/>
        <dbReference type="ChEBI" id="CHEBI:30616"/>
        <dbReference type="ChEBI" id="CHEBI:83421"/>
        <dbReference type="ChEBI" id="CHEBI:456216"/>
        <dbReference type="EC" id="2.7.11.1"/>
    </reaction>
</comment>
<comment type="catalytic activity">
    <reaction evidence="8">
        <text>L-threonyl-[protein] + ATP = O-phospho-L-threonyl-[protein] + ADP + H(+)</text>
        <dbReference type="Rhea" id="RHEA:46608"/>
        <dbReference type="Rhea" id="RHEA-COMP:11060"/>
        <dbReference type="Rhea" id="RHEA-COMP:11605"/>
        <dbReference type="ChEBI" id="CHEBI:15378"/>
        <dbReference type="ChEBI" id="CHEBI:30013"/>
        <dbReference type="ChEBI" id="CHEBI:30616"/>
        <dbReference type="ChEBI" id="CHEBI:61977"/>
        <dbReference type="ChEBI" id="CHEBI:456216"/>
        <dbReference type="EC" id="2.7.11.1"/>
    </reaction>
</comment>
<comment type="activity regulation">
    <text evidence="1">Activated by calcium. Autophosphorylation may play an important role in the regulation of the kinase activity.</text>
</comment>
<comment type="subcellular location">
    <subcellularLocation>
        <location evidence="8">Membrane</location>
        <topology evidence="8">Lipid-anchor</topology>
    </subcellularLocation>
</comment>
<comment type="induction">
    <text evidence="6">By UV-C.</text>
</comment>
<comment type="domain">
    <text evidence="1">There are 3 contiguous domains conserved in the CDPK subfamily: a kinase domain, an autoinhibitory (junction) domain and a calmodulin-like domain. The autoinhibitory domain (328-358) inactivates kinase activity under calcium-free conditions.</text>
</comment>
<comment type="similarity">
    <text evidence="8">Belongs to the protein kinase superfamily. Ser/Thr protein kinase family. CDPK subfamily.</text>
</comment>
<reference key="1">
    <citation type="journal article" date="2005" name="Genome Res.">
        <title>Sequence, annotation, and analysis of synteny between rice chromosome 3 and diverged grass species.</title>
        <authorList>
            <consortium name="The rice chromosome 3 sequencing consortium"/>
            <person name="Buell C.R."/>
            <person name="Yuan Q."/>
            <person name="Ouyang S."/>
            <person name="Liu J."/>
            <person name="Zhu W."/>
            <person name="Wang A."/>
            <person name="Maiti R."/>
            <person name="Haas B."/>
            <person name="Wortman J."/>
            <person name="Pertea M."/>
            <person name="Jones K.M."/>
            <person name="Kim M."/>
            <person name="Overton L."/>
            <person name="Tsitrin T."/>
            <person name="Fadrosh D."/>
            <person name="Bera J."/>
            <person name="Weaver B."/>
            <person name="Jin S."/>
            <person name="Johri S."/>
            <person name="Reardon M."/>
            <person name="Webb K."/>
            <person name="Hill J."/>
            <person name="Moffat K."/>
            <person name="Tallon L."/>
            <person name="Van Aken S."/>
            <person name="Lewis M."/>
            <person name="Utterback T."/>
            <person name="Feldblyum T."/>
            <person name="Zismann V."/>
            <person name="Iobst S."/>
            <person name="Hsiao J."/>
            <person name="de Vazeille A.R."/>
            <person name="Salzberg S.L."/>
            <person name="White O."/>
            <person name="Fraser C.M."/>
            <person name="Yu Y."/>
            <person name="Kim H."/>
            <person name="Rambo T."/>
            <person name="Currie J."/>
            <person name="Collura K."/>
            <person name="Kernodle-Thompson S."/>
            <person name="Wei F."/>
            <person name="Kudrna K."/>
            <person name="Ammiraju J.S.S."/>
            <person name="Luo M."/>
            <person name="Goicoechea J.L."/>
            <person name="Wing R.A."/>
            <person name="Henry D."/>
            <person name="Oates R."/>
            <person name="Palmer M."/>
            <person name="Pries G."/>
            <person name="Saski C."/>
            <person name="Simmons J."/>
            <person name="Soderlund C."/>
            <person name="Nelson W."/>
            <person name="de la Bastide M."/>
            <person name="Spiegel L."/>
            <person name="Nascimento L."/>
            <person name="Huang E."/>
            <person name="Preston R."/>
            <person name="Zutavern T."/>
            <person name="Palmer L."/>
            <person name="O'Shaughnessy A."/>
            <person name="Dike S."/>
            <person name="McCombie W.R."/>
            <person name="Minx P."/>
            <person name="Cordum H."/>
            <person name="Wilson R."/>
            <person name="Jin W."/>
            <person name="Lee H.R."/>
            <person name="Jiang J."/>
            <person name="Jackson S."/>
        </authorList>
    </citation>
    <scope>NUCLEOTIDE SEQUENCE [LARGE SCALE GENOMIC DNA]</scope>
    <source>
        <strain>cv. Nipponbare</strain>
    </source>
</reference>
<reference key="2">
    <citation type="journal article" date="2005" name="Nature">
        <title>The map-based sequence of the rice genome.</title>
        <authorList>
            <consortium name="International rice genome sequencing project (IRGSP)"/>
        </authorList>
    </citation>
    <scope>NUCLEOTIDE SEQUENCE [LARGE SCALE GENOMIC DNA]</scope>
    <source>
        <strain>cv. Nipponbare</strain>
    </source>
</reference>
<reference key="3">
    <citation type="journal article" date="2008" name="Nucleic Acids Res.">
        <title>The rice annotation project database (RAP-DB): 2008 update.</title>
        <authorList>
            <consortium name="The rice annotation project (RAP)"/>
        </authorList>
    </citation>
    <scope>GENOME REANNOTATION</scope>
    <source>
        <strain>cv. Nipponbare</strain>
    </source>
</reference>
<reference key="4">
    <citation type="journal article" date="2013" name="Rice">
        <title>Improvement of the Oryza sativa Nipponbare reference genome using next generation sequence and optical map data.</title>
        <authorList>
            <person name="Kawahara Y."/>
            <person name="de la Bastide M."/>
            <person name="Hamilton J.P."/>
            <person name="Kanamori H."/>
            <person name="McCombie W.R."/>
            <person name="Ouyang S."/>
            <person name="Schwartz D.C."/>
            <person name="Tanaka T."/>
            <person name="Wu J."/>
            <person name="Zhou S."/>
            <person name="Childs K.L."/>
            <person name="Davidson R.M."/>
            <person name="Lin H."/>
            <person name="Quesada-Ocampo L."/>
            <person name="Vaillancourt B."/>
            <person name="Sakai H."/>
            <person name="Lee S.S."/>
            <person name="Kim J."/>
            <person name="Numa H."/>
            <person name="Itoh T."/>
            <person name="Buell C.R."/>
            <person name="Matsumoto T."/>
        </authorList>
    </citation>
    <scope>GENOME REANNOTATION</scope>
    <source>
        <strain>cv. Nipponbare</strain>
    </source>
</reference>
<reference key="5">
    <citation type="journal article" date="2005" name="PLoS Biol.">
        <title>The genomes of Oryza sativa: a history of duplications.</title>
        <authorList>
            <person name="Yu J."/>
            <person name="Wang J."/>
            <person name="Lin W."/>
            <person name="Li S."/>
            <person name="Li H."/>
            <person name="Zhou J."/>
            <person name="Ni P."/>
            <person name="Dong W."/>
            <person name="Hu S."/>
            <person name="Zeng C."/>
            <person name="Zhang J."/>
            <person name="Zhang Y."/>
            <person name="Li R."/>
            <person name="Xu Z."/>
            <person name="Li S."/>
            <person name="Li X."/>
            <person name="Zheng H."/>
            <person name="Cong L."/>
            <person name="Lin L."/>
            <person name="Yin J."/>
            <person name="Geng J."/>
            <person name="Li G."/>
            <person name="Shi J."/>
            <person name="Liu J."/>
            <person name="Lv H."/>
            <person name="Li J."/>
            <person name="Wang J."/>
            <person name="Deng Y."/>
            <person name="Ran L."/>
            <person name="Shi X."/>
            <person name="Wang X."/>
            <person name="Wu Q."/>
            <person name="Li C."/>
            <person name="Ren X."/>
            <person name="Wang J."/>
            <person name="Wang X."/>
            <person name="Li D."/>
            <person name="Liu D."/>
            <person name="Zhang X."/>
            <person name="Ji Z."/>
            <person name="Zhao W."/>
            <person name="Sun Y."/>
            <person name="Zhang Z."/>
            <person name="Bao J."/>
            <person name="Han Y."/>
            <person name="Dong L."/>
            <person name="Ji J."/>
            <person name="Chen P."/>
            <person name="Wu S."/>
            <person name="Liu J."/>
            <person name="Xiao Y."/>
            <person name="Bu D."/>
            <person name="Tan J."/>
            <person name="Yang L."/>
            <person name="Ye C."/>
            <person name="Zhang J."/>
            <person name="Xu J."/>
            <person name="Zhou Y."/>
            <person name="Yu Y."/>
            <person name="Zhang B."/>
            <person name="Zhuang S."/>
            <person name="Wei H."/>
            <person name="Liu B."/>
            <person name="Lei M."/>
            <person name="Yu H."/>
            <person name="Li Y."/>
            <person name="Xu H."/>
            <person name="Wei S."/>
            <person name="He X."/>
            <person name="Fang L."/>
            <person name="Zhang Z."/>
            <person name="Zhang Y."/>
            <person name="Huang X."/>
            <person name="Su Z."/>
            <person name="Tong W."/>
            <person name="Li J."/>
            <person name="Tong Z."/>
            <person name="Li S."/>
            <person name="Ye J."/>
            <person name="Wang L."/>
            <person name="Fang L."/>
            <person name="Lei T."/>
            <person name="Chen C.-S."/>
            <person name="Chen H.-C."/>
            <person name="Xu Z."/>
            <person name="Li H."/>
            <person name="Huang H."/>
            <person name="Zhang F."/>
            <person name="Xu H."/>
            <person name="Li N."/>
            <person name="Zhao C."/>
            <person name="Li S."/>
            <person name="Dong L."/>
            <person name="Huang Y."/>
            <person name="Li L."/>
            <person name="Xi Y."/>
            <person name="Qi Q."/>
            <person name="Li W."/>
            <person name="Zhang B."/>
            <person name="Hu W."/>
            <person name="Zhang Y."/>
            <person name="Tian X."/>
            <person name="Jiao Y."/>
            <person name="Liang X."/>
            <person name="Jin J."/>
            <person name="Gao L."/>
            <person name="Zheng W."/>
            <person name="Hao B."/>
            <person name="Liu S.-M."/>
            <person name="Wang W."/>
            <person name="Yuan L."/>
            <person name="Cao M."/>
            <person name="McDermott J."/>
            <person name="Samudrala R."/>
            <person name="Wang J."/>
            <person name="Wong G.K.-S."/>
            <person name="Yang H."/>
        </authorList>
    </citation>
    <scope>NUCLEOTIDE SEQUENCE [LARGE SCALE GENOMIC DNA]</scope>
    <source>
        <strain>cv. Nipponbare</strain>
    </source>
</reference>
<reference key="6">
    <citation type="journal article" date="2003" name="Science">
        <title>Collection, mapping, and annotation of over 28,000 cDNA clones from japonica rice.</title>
        <authorList>
            <consortium name="The rice full-length cDNA consortium"/>
        </authorList>
    </citation>
    <scope>NUCLEOTIDE SEQUENCE [LARGE SCALE MRNA]</scope>
    <source>
        <strain>cv. Nipponbare</strain>
    </source>
</reference>
<reference key="7">
    <citation type="journal article" date="2005" name="Plant Cell Physiol.">
        <title>Genome-wide identification of the rice calcium-dependent protein kinase and its closely related kinase gene families: comprehensive analysis of the CDPKs gene family in rice.</title>
        <authorList>
            <person name="Asano T."/>
            <person name="Tanaka N."/>
            <person name="Yang G."/>
            <person name="Hayashi N."/>
            <person name="Komatsu S."/>
        </authorList>
    </citation>
    <scope>GENE FAMILY</scope>
    <scope>NOMENCLATURE</scope>
</reference>
<reference key="8">
    <citation type="journal article" date="2013" name="Phytochemistry">
        <title>Transcriptomic analysis of UV-treated rice leaves reveals UV-induced phytoalexin biosynthetic pathways and their regulatory networks in rice.</title>
        <authorList>
            <person name="Park H.L."/>
            <person name="Lee S.W."/>
            <person name="Jung K.H."/>
            <person name="Hahn T.R."/>
            <person name="Cho M.H."/>
        </authorList>
    </citation>
    <scope>INDUCTION BY UV-C</scope>
</reference>
<feature type="initiator methionine" description="Removed" evidence="2">
    <location>
        <position position="1"/>
    </location>
</feature>
<feature type="chain" id="PRO_0000437552" description="Calcium-dependent protein kinase 8">
    <location>
        <begin position="2"/>
        <end position="538"/>
    </location>
</feature>
<feature type="domain" description="Protein kinase" evidence="3">
    <location>
        <begin position="64"/>
        <end position="322"/>
    </location>
</feature>
<feature type="domain" description="EF-hand 1" evidence="4">
    <location>
        <begin position="365"/>
        <end position="400"/>
    </location>
</feature>
<feature type="domain" description="EF-hand 2" evidence="4">
    <location>
        <begin position="401"/>
        <end position="436"/>
    </location>
</feature>
<feature type="domain" description="EF-hand 3" evidence="4">
    <location>
        <begin position="437"/>
        <end position="472"/>
    </location>
</feature>
<feature type="domain" description="EF-hand 4" evidence="4">
    <location>
        <begin position="473"/>
        <end position="508"/>
    </location>
</feature>
<feature type="region of interest" description="Disordered" evidence="5">
    <location>
        <begin position="1"/>
        <end position="26"/>
    </location>
</feature>
<feature type="region of interest" description="Autoinhibitory domain" evidence="1">
    <location>
        <begin position="328"/>
        <end position="358"/>
    </location>
</feature>
<feature type="compositionally biased region" description="Basic residues" evidence="5">
    <location>
        <begin position="16"/>
        <end position="25"/>
    </location>
</feature>
<feature type="active site" description="Proton acceptor" evidence="3">
    <location>
        <position position="188"/>
    </location>
</feature>
<feature type="binding site" evidence="3">
    <location>
        <begin position="70"/>
        <end position="78"/>
    </location>
    <ligand>
        <name>ATP</name>
        <dbReference type="ChEBI" id="CHEBI:30616"/>
    </ligand>
</feature>
<feature type="binding site" evidence="3">
    <location>
        <position position="93"/>
    </location>
    <ligand>
        <name>ATP</name>
        <dbReference type="ChEBI" id="CHEBI:30616"/>
    </ligand>
</feature>
<feature type="binding site" evidence="4">
    <location>
        <position position="378"/>
    </location>
    <ligand>
        <name>Ca(2+)</name>
        <dbReference type="ChEBI" id="CHEBI:29108"/>
        <label>1</label>
    </ligand>
</feature>
<feature type="binding site" evidence="4">
    <location>
        <position position="380"/>
    </location>
    <ligand>
        <name>Ca(2+)</name>
        <dbReference type="ChEBI" id="CHEBI:29108"/>
        <label>1</label>
    </ligand>
</feature>
<feature type="binding site" evidence="4">
    <location>
        <position position="382"/>
    </location>
    <ligand>
        <name>Ca(2+)</name>
        <dbReference type="ChEBI" id="CHEBI:29108"/>
        <label>1</label>
    </ligand>
</feature>
<feature type="binding site" evidence="4">
    <location>
        <position position="384"/>
    </location>
    <ligand>
        <name>Ca(2+)</name>
        <dbReference type="ChEBI" id="CHEBI:29108"/>
        <label>1</label>
    </ligand>
</feature>
<feature type="binding site" evidence="4">
    <location>
        <position position="389"/>
    </location>
    <ligand>
        <name>Ca(2+)</name>
        <dbReference type="ChEBI" id="CHEBI:29108"/>
        <label>1</label>
    </ligand>
</feature>
<feature type="binding site" evidence="4">
    <location>
        <position position="414"/>
    </location>
    <ligand>
        <name>Ca(2+)</name>
        <dbReference type="ChEBI" id="CHEBI:29108"/>
        <label>2</label>
    </ligand>
</feature>
<feature type="binding site" evidence="4">
    <location>
        <position position="416"/>
    </location>
    <ligand>
        <name>Ca(2+)</name>
        <dbReference type="ChEBI" id="CHEBI:29108"/>
        <label>2</label>
    </ligand>
</feature>
<feature type="binding site" evidence="4">
    <location>
        <position position="418"/>
    </location>
    <ligand>
        <name>Ca(2+)</name>
        <dbReference type="ChEBI" id="CHEBI:29108"/>
        <label>2</label>
    </ligand>
</feature>
<feature type="binding site" evidence="4">
    <location>
        <position position="425"/>
    </location>
    <ligand>
        <name>Ca(2+)</name>
        <dbReference type="ChEBI" id="CHEBI:29108"/>
        <label>2</label>
    </ligand>
</feature>
<feature type="binding site" evidence="4">
    <location>
        <position position="450"/>
    </location>
    <ligand>
        <name>Ca(2+)</name>
        <dbReference type="ChEBI" id="CHEBI:29108"/>
        <label>3</label>
    </ligand>
</feature>
<feature type="binding site" evidence="4">
    <location>
        <position position="452"/>
    </location>
    <ligand>
        <name>Ca(2+)</name>
        <dbReference type="ChEBI" id="CHEBI:29108"/>
        <label>3</label>
    </ligand>
</feature>
<feature type="binding site" evidence="4">
    <location>
        <position position="454"/>
    </location>
    <ligand>
        <name>Ca(2+)</name>
        <dbReference type="ChEBI" id="CHEBI:29108"/>
        <label>3</label>
    </ligand>
</feature>
<feature type="binding site" evidence="4">
    <location>
        <position position="456"/>
    </location>
    <ligand>
        <name>Ca(2+)</name>
        <dbReference type="ChEBI" id="CHEBI:29108"/>
        <label>3</label>
    </ligand>
</feature>
<feature type="binding site" evidence="4">
    <location>
        <position position="461"/>
    </location>
    <ligand>
        <name>Ca(2+)</name>
        <dbReference type="ChEBI" id="CHEBI:29108"/>
        <label>3</label>
    </ligand>
</feature>
<feature type="binding site" evidence="4">
    <location>
        <position position="486"/>
    </location>
    <ligand>
        <name>Ca(2+)</name>
        <dbReference type="ChEBI" id="CHEBI:29108"/>
        <label>4</label>
    </ligand>
</feature>
<feature type="binding site" evidence="4">
    <location>
        <position position="488"/>
    </location>
    <ligand>
        <name>Ca(2+)</name>
        <dbReference type="ChEBI" id="CHEBI:29108"/>
        <label>4</label>
    </ligand>
</feature>
<feature type="binding site" evidence="4">
    <location>
        <position position="490"/>
    </location>
    <ligand>
        <name>Ca(2+)</name>
        <dbReference type="ChEBI" id="CHEBI:29108"/>
        <label>4</label>
    </ligand>
</feature>
<feature type="binding site" evidence="4">
    <location>
        <position position="492"/>
    </location>
    <ligand>
        <name>Ca(2+)</name>
        <dbReference type="ChEBI" id="CHEBI:29108"/>
        <label>4</label>
    </ligand>
</feature>
<feature type="binding site" evidence="4">
    <location>
        <position position="497"/>
    </location>
    <ligand>
        <name>Ca(2+)</name>
        <dbReference type="ChEBI" id="CHEBI:29108"/>
        <label>4</label>
    </ligand>
</feature>
<feature type="lipid moiety-binding region" description="N-myristoyl glycine" evidence="2">
    <location>
        <position position="2"/>
    </location>
</feature>
<gene>
    <name evidence="7" type="primary">CPK8</name>
    <name evidence="12" type="ordered locus">Os03g0808600</name>
    <name evidence="11" type="ordered locus">LOC_Os03g59390</name>
    <name evidence="13" type="ORF">OsJ_13049</name>
    <name evidence="10" type="ORF">OSJNBa0028F23.27</name>
    <name evidence="9" type="ORF">OSJNBa0060M17.7</name>
</gene>
<keyword id="KW-0067">ATP-binding</keyword>
<keyword id="KW-0106">Calcium</keyword>
<keyword id="KW-0418">Kinase</keyword>
<keyword id="KW-0449">Lipoprotein</keyword>
<keyword id="KW-0472">Membrane</keyword>
<keyword id="KW-0479">Metal-binding</keyword>
<keyword id="KW-0519">Myristate</keyword>
<keyword id="KW-0547">Nucleotide-binding</keyword>
<keyword id="KW-1185">Reference proteome</keyword>
<keyword id="KW-0677">Repeat</keyword>
<keyword id="KW-0723">Serine/threonine-protein kinase</keyword>
<keyword id="KW-0808">Transferase</keyword>
<proteinExistence type="evidence at transcript level"/>
<name>CDPK8_ORYSJ</name>
<organism>
    <name type="scientific">Oryza sativa subsp. japonica</name>
    <name type="common">Rice</name>
    <dbReference type="NCBI Taxonomy" id="39947"/>
    <lineage>
        <taxon>Eukaryota</taxon>
        <taxon>Viridiplantae</taxon>
        <taxon>Streptophyta</taxon>
        <taxon>Embryophyta</taxon>
        <taxon>Tracheophyta</taxon>
        <taxon>Spermatophyta</taxon>
        <taxon>Magnoliopsida</taxon>
        <taxon>Liliopsida</taxon>
        <taxon>Poales</taxon>
        <taxon>Poaceae</taxon>
        <taxon>BOP clade</taxon>
        <taxon>Oryzoideae</taxon>
        <taxon>Oryzeae</taxon>
        <taxon>Oryzinae</taxon>
        <taxon>Oryza</taxon>
        <taxon>Oryza sativa</taxon>
    </lineage>
</organism>
<dbReference type="EC" id="2.7.11.1" evidence="8"/>
<dbReference type="EMBL" id="AC135595">
    <property type="protein sequence ID" value="AAT77923.1"/>
    <property type="molecule type" value="Genomic_DNA"/>
</dbReference>
<dbReference type="EMBL" id="AC145384">
    <property type="protein sequence ID" value="AAS07386.1"/>
    <property type="molecule type" value="Genomic_DNA"/>
</dbReference>
<dbReference type="EMBL" id="DP000009">
    <property type="protein sequence ID" value="ABF99465.1"/>
    <property type="molecule type" value="Genomic_DNA"/>
</dbReference>
<dbReference type="EMBL" id="AP008209">
    <property type="protein sequence ID" value="BAF13566.1"/>
    <property type="molecule type" value="Genomic_DNA"/>
</dbReference>
<dbReference type="EMBL" id="AP014959">
    <property type="protein sequence ID" value="BAS86977.1"/>
    <property type="molecule type" value="Genomic_DNA"/>
</dbReference>
<dbReference type="EMBL" id="CM000140">
    <property type="protein sequence ID" value="EAZ29001.1"/>
    <property type="molecule type" value="Genomic_DNA"/>
</dbReference>
<dbReference type="EMBL" id="AK066615">
    <property type="protein sequence ID" value="BAG90053.1"/>
    <property type="molecule type" value="mRNA"/>
</dbReference>
<dbReference type="RefSeq" id="XP_015632560.1">
    <property type="nucleotide sequence ID" value="XM_015777074.1"/>
</dbReference>
<dbReference type="SMR" id="Q75GE8"/>
<dbReference type="FunCoup" id="Q75GE8">
    <property type="interactions" value="735"/>
</dbReference>
<dbReference type="STRING" id="39947.Q75GE8"/>
<dbReference type="PaxDb" id="39947-Q75GE8"/>
<dbReference type="EnsemblPlants" id="Os03t0808600-01">
    <property type="protein sequence ID" value="Os03t0808600-01"/>
    <property type="gene ID" value="Os03g0808600"/>
</dbReference>
<dbReference type="Gramene" id="Os03t0808600-01">
    <property type="protein sequence ID" value="Os03t0808600-01"/>
    <property type="gene ID" value="Os03g0808600"/>
</dbReference>
<dbReference type="KEGG" id="dosa:Os03g0808600"/>
<dbReference type="eggNOG" id="KOG0032">
    <property type="taxonomic scope" value="Eukaryota"/>
</dbReference>
<dbReference type="HOGENOM" id="CLU_000288_37_4_1"/>
<dbReference type="InParanoid" id="Q75GE8"/>
<dbReference type="OMA" id="VEDYYIL"/>
<dbReference type="OrthoDB" id="40902at2759"/>
<dbReference type="Proteomes" id="UP000000763">
    <property type="component" value="Chromosome 3"/>
</dbReference>
<dbReference type="Proteomes" id="UP000007752">
    <property type="component" value="Chromosome 3"/>
</dbReference>
<dbReference type="Proteomes" id="UP000059680">
    <property type="component" value="Chromosome 3"/>
</dbReference>
<dbReference type="GO" id="GO:0005737">
    <property type="term" value="C:cytoplasm"/>
    <property type="evidence" value="ECO:0000318"/>
    <property type="project" value="GO_Central"/>
</dbReference>
<dbReference type="GO" id="GO:0005634">
    <property type="term" value="C:nucleus"/>
    <property type="evidence" value="ECO:0000318"/>
    <property type="project" value="GO_Central"/>
</dbReference>
<dbReference type="GO" id="GO:0005886">
    <property type="term" value="C:plasma membrane"/>
    <property type="evidence" value="ECO:0000318"/>
    <property type="project" value="GO_Central"/>
</dbReference>
<dbReference type="GO" id="GO:0005524">
    <property type="term" value="F:ATP binding"/>
    <property type="evidence" value="ECO:0007669"/>
    <property type="project" value="UniProtKB-KW"/>
</dbReference>
<dbReference type="GO" id="GO:0005509">
    <property type="term" value="F:calcium ion binding"/>
    <property type="evidence" value="ECO:0007669"/>
    <property type="project" value="InterPro"/>
</dbReference>
<dbReference type="GO" id="GO:0009931">
    <property type="term" value="F:calcium-dependent protein serine/threonine kinase activity"/>
    <property type="evidence" value="ECO:0000318"/>
    <property type="project" value="GO_Central"/>
</dbReference>
<dbReference type="GO" id="GO:0004683">
    <property type="term" value="F:calcium/calmodulin-dependent protein kinase activity"/>
    <property type="evidence" value="ECO:0000318"/>
    <property type="project" value="GO_Central"/>
</dbReference>
<dbReference type="GO" id="GO:0005516">
    <property type="term" value="F:calmodulin binding"/>
    <property type="evidence" value="ECO:0000318"/>
    <property type="project" value="GO_Central"/>
</dbReference>
<dbReference type="GO" id="GO:0106310">
    <property type="term" value="F:protein serine kinase activity"/>
    <property type="evidence" value="ECO:0007669"/>
    <property type="project" value="RHEA"/>
</dbReference>
<dbReference type="GO" id="GO:0035556">
    <property type="term" value="P:intracellular signal transduction"/>
    <property type="evidence" value="ECO:0000318"/>
    <property type="project" value="GO_Central"/>
</dbReference>
<dbReference type="CDD" id="cd15898">
    <property type="entry name" value="EFh_PI-PLC"/>
    <property type="match status" value="1"/>
</dbReference>
<dbReference type="CDD" id="cd05117">
    <property type="entry name" value="STKc_CAMK"/>
    <property type="match status" value="1"/>
</dbReference>
<dbReference type="FunFam" id="3.30.200.20:FF:000004">
    <property type="entry name" value="Calcium-dependent protein kinase 1"/>
    <property type="match status" value="1"/>
</dbReference>
<dbReference type="FunFam" id="1.10.510.10:FF:000067">
    <property type="entry name" value="calcium-dependent protein kinase 13"/>
    <property type="match status" value="1"/>
</dbReference>
<dbReference type="FunFam" id="1.10.238.10:FF:000050">
    <property type="entry name" value="Calcium-dependent protein kinase 7"/>
    <property type="match status" value="1"/>
</dbReference>
<dbReference type="Gene3D" id="1.10.238.10">
    <property type="entry name" value="EF-hand"/>
    <property type="match status" value="1"/>
</dbReference>
<dbReference type="Gene3D" id="3.30.200.20">
    <property type="entry name" value="Phosphorylase Kinase, domain 1"/>
    <property type="match status" value="1"/>
</dbReference>
<dbReference type="Gene3D" id="1.10.510.10">
    <property type="entry name" value="Transferase(Phosphotransferase) domain 1"/>
    <property type="match status" value="1"/>
</dbReference>
<dbReference type="InterPro" id="IPR050205">
    <property type="entry name" value="CDPK_Ser/Thr_kinases"/>
</dbReference>
<dbReference type="InterPro" id="IPR011992">
    <property type="entry name" value="EF-hand-dom_pair"/>
</dbReference>
<dbReference type="InterPro" id="IPR018247">
    <property type="entry name" value="EF_Hand_1_Ca_BS"/>
</dbReference>
<dbReference type="InterPro" id="IPR002048">
    <property type="entry name" value="EF_hand_dom"/>
</dbReference>
<dbReference type="InterPro" id="IPR011009">
    <property type="entry name" value="Kinase-like_dom_sf"/>
</dbReference>
<dbReference type="InterPro" id="IPR000719">
    <property type="entry name" value="Prot_kinase_dom"/>
</dbReference>
<dbReference type="InterPro" id="IPR017441">
    <property type="entry name" value="Protein_kinase_ATP_BS"/>
</dbReference>
<dbReference type="InterPro" id="IPR008271">
    <property type="entry name" value="Ser/Thr_kinase_AS"/>
</dbReference>
<dbReference type="PANTHER" id="PTHR24349">
    <property type="entry name" value="SERINE/THREONINE-PROTEIN KINASE"/>
    <property type="match status" value="1"/>
</dbReference>
<dbReference type="Pfam" id="PF13499">
    <property type="entry name" value="EF-hand_7"/>
    <property type="match status" value="2"/>
</dbReference>
<dbReference type="Pfam" id="PF00069">
    <property type="entry name" value="Pkinase"/>
    <property type="match status" value="1"/>
</dbReference>
<dbReference type="SMART" id="SM00054">
    <property type="entry name" value="EFh"/>
    <property type="match status" value="4"/>
</dbReference>
<dbReference type="SMART" id="SM00220">
    <property type="entry name" value="S_TKc"/>
    <property type="match status" value="1"/>
</dbReference>
<dbReference type="SUPFAM" id="SSF47473">
    <property type="entry name" value="EF-hand"/>
    <property type="match status" value="1"/>
</dbReference>
<dbReference type="SUPFAM" id="SSF56112">
    <property type="entry name" value="Protein kinase-like (PK-like)"/>
    <property type="match status" value="1"/>
</dbReference>
<dbReference type="PROSITE" id="PS00018">
    <property type="entry name" value="EF_HAND_1"/>
    <property type="match status" value="4"/>
</dbReference>
<dbReference type="PROSITE" id="PS50222">
    <property type="entry name" value="EF_HAND_2"/>
    <property type="match status" value="4"/>
</dbReference>
<dbReference type="PROSITE" id="PS00107">
    <property type="entry name" value="PROTEIN_KINASE_ATP"/>
    <property type="match status" value="1"/>
</dbReference>
<dbReference type="PROSITE" id="PS50011">
    <property type="entry name" value="PROTEIN_KINASE_DOM"/>
    <property type="match status" value="1"/>
</dbReference>
<dbReference type="PROSITE" id="PS00108">
    <property type="entry name" value="PROTEIN_KINASE_ST"/>
    <property type="match status" value="1"/>
</dbReference>
<protein>
    <recommendedName>
        <fullName evidence="8">Calcium-dependent protein kinase 8</fullName>
        <shortName evidence="8">OsCDPK8</shortName>
        <shortName evidence="7">OsCPK8</shortName>
        <ecNumber evidence="8">2.7.11.1</ecNumber>
    </recommendedName>
</protein>
<accession>Q75GE8</accession>